<gene>
    <name type="primary">MT-CYB</name>
    <name type="synonym">COB</name>
    <name type="synonym">CYTB</name>
    <name type="synonym">MTCYB</name>
</gene>
<name>CYB_ALTMC</name>
<accession>Q6W6L7</accession>
<keyword id="KW-0249">Electron transport</keyword>
<keyword id="KW-0349">Heme</keyword>
<keyword id="KW-0408">Iron</keyword>
<keyword id="KW-0472">Membrane</keyword>
<keyword id="KW-0479">Metal-binding</keyword>
<keyword id="KW-0496">Mitochondrion</keyword>
<keyword id="KW-0999">Mitochondrion inner membrane</keyword>
<keyword id="KW-0679">Respiratory chain</keyword>
<keyword id="KW-0812">Transmembrane</keyword>
<keyword id="KW-1133">Transmembrane helix</keyword>
<keyword id="KW-0813">Transport</keyword>
<keyword id="KW-0830">Ubiquinone</keyword>
<organism>
    <name type="scientific">Alticola macrotis</name>
    <name type="common">Large-eared vole</name>
    <dbReference type="NCBI Taxonomy" id="98316"/>
    <lineage>
        <taxon>Eukaryota</taxon>
        <taxon>Metazoa</taxon>
        <taxon>Chordata</taxon>
        <taxon>Craniata</taxon>
        <taxon>Vertebrata</taxon>
        <taxon>Euteleostomi</taxon>
        <taxon>Mammalia</taxon>
        <taxon>Eutheria</taxon>
        <taxon>Euarchontoglires</taxon>
        <taxon>Glires</taxon>
        <taxon>Rodentia</taxon>
        <taxon>Myomorpha</taxon>
        <taxon>Muroidea</taxon>
        <taxon>Cricetidae</taxon>
        <taxon>Arvicolinae</taxon>
        <taxon>Alticola</taxon>
    </lineage>
</organism>
<evidence type="ECO:0000250" key="1"/>
<evidence type="ECO:0000250" key="2">
    <source>
        <dbReference type="UniProtKB" id="P00157"/>
    </source>
</evidence>
<evidence type="ECO:0000255" key="3">
    <source>
        <dbReference type="PROSITE-ProRule" id="PRU00967"/>
    </source>
</evidence>
<evidence type="ECO:0000255" key="4">
    <source>
        <dbReference type="PROSITE-ProRule" id="PRU00968"/>
    </source>
</evidence>
<reference key="1">
    <citation type="journal article" date="2004" name="Mol. Phylogenet. Evol.">
        <title>Historical biogeography at the crossroads of the northern continents: molecular phylogenetics of red-backed voles (Rodentia: Arvicolinae).</title>
        <authorList>
            <person name="Cook J.A."/>
            <person name="Runck A.M."/>
            <person name="Conroy C.J."/>
        </authorList>
    </citation>
    <scope>NUCLEOTIDE SEQUENCE [GENOMIC DNA]</scope>
</reference>
<geneLocation type="mitochondrion"/>
<protein>
    <recommendedName>
        <fullName>Cytochrome b</fullName>
    </recommendedName>
    <alternativeName>
        <fullName>Complex III subunit 3</fullName>
    </alternativeName>
    <alternativeName>
        <fullName>Complex III subunit III</fullName>
    </alternativeName>
    <alternativeName>
        <fullName>Cytochrome b-c1 complex subunit 3</fullName>
    </alternativeName>
    <alternativeName>
        <fullName>Ubiquinol-cytochrome-c reductase complex cytochrome b subunit</fullName>
    </alternativeName>
</protein>
<comment type="function">
    <text evidence="2">Component of the ubiquinol-cytochrome c reductase complex (complex III or cytochrome b-c1 complex) that is part of the mitochondrial respiratory chain. The b-c1 complex mediates electron transfer from ubiquinol to cytochrome c. Contributes to the generation of a proton gradient across the mitochondrial membrane that is then used for ATP synthesis.</text>
</comment>
<comment type="cofactor">
    <cofactor evidence="2">
        <name>heme b</name>
        <dbReference type="ChEBI" id="CHEBI:60344"/>
    </cofactor>
    <text evidence="2">Binds 2 heme b groups non-covalently.</text>
</comment>
<comment type="subunit">
    <text evidence="2">The cytochrome bc1 complex contains 11 subunits: 3 respiratory subunits (MT-CYB, CYC1 and UQCRFS1), 2 core proteins (UQCRC1 and UQCRC2) and 6 low-molecular weight proteins (UQCRH/QCR6, UQCRB/QCR7, UQCRQ/QCR8, UQCR10/QCR9, UQCR11/QCR10 and a cleavage product of UQCRFS1). This cytochrome bc1 complex then forms a dimer.</text>
</comment>
<comment type="subcellular location">
    <subcellularLocation>
        <location evidence="2">Mitochondrion inner membrane</location>
        <topology evidence="2">Multi-pass membrane protein</topology>
    </subcellularLocation>
</comment>
<comment type="miscellaneous">
    <text evidence="1">Heme 1 (or BL or b562) is low-potential and absorbs at about 562 nm, and heme 2 (or BH or b566) is high-potential and absorbs at about 566 nm.</text>
</comment>
<comment type="similarity">
    <text evidence="3 4">Belongs to the cytochrome b family.</text>
</comment>
<comment type="caution">
    <text evidence="2">The full-length protein contains only eight transmembrane helices, not nine as predicted by bioinformatics tools.</text>
</comment>
<feature type="chain" id="PRO_0000254982" description="Cytochrome b">
    <location>
        <begin position="1"/>
        <end position="380"/>
    </location>
</feature>
<feature type="transmembrane region" description="Helical" evidence="2">
    <location>
        <begin position="33"/>
        <end position="53"/>
    </location>
</feature>
<feature type="transmembrane region" description="Helical" evidence="2">
    <location>
        <begin position="77"/>
        <end position="98"/>
    </location>
</feature>
<feature type="transmembrane region" description="Helical" evidence="2">
    <location>
        <begin position="113"/>
        <end position="133"/>
    </location>
</feature>
<feature type="transmembrane region" description="Helical" evidence="2">
    <location>
        <begin position="178"/>
        <end position="198"/>
    </location>
</feature>
<feature type="transmembrane region" description="Helical" evidence="2">
    <location>
        <begin position="226"/>
        <end position="246"/>
    </location>
</feature>
<feature type="transmembrane region" description="Helical" evidence="2">
    <location>
        <begin position="288"/>
        <end position="308"/>
    </location>
</feature>
<feature type="transmembrane region" description="Helical" evidence="2">
    <location>
        <begin position="320"/>
        <end position="340"/>
    </location>
</feature>
<feature type="transmembrane region" description="Helical" evidence="2">
    <location>
        <begin position="347"/>
        <end position="367"/>
    </location>
</feature>
<feature type="binding site" description="axial binding residue" evidence="2">
    <location>
        <position position="83"/>
    </location>
    <ligand>
        <name>heme b</name>
        <dbReference type="ChEBI" id="CHEBI:60344"/>
        <label>b562</label>
    </ligand>
    <ligandPart>
        <name>Fe</name>
        <dbReference type="ChEBI" id="CHEBI:18248"/>
    </ligandPart>
</feature>
<feature type="binding site" description="axial binding residue" evidence="2">
    <location>
        <position position="97"/>
    </location>
    <ligand>
        <name>heme b</name>
        <dbReference type="ChEBI" id="CHEBI:60344"/>
        <label>b566</label>
    </ligand>
    <ligandPart>
        <name>Fe</name>
        <dbReference type="ChEBI" id="CHEBI:18248"/>
    </ligandPart>
</feature>
<feature type="binding site" description="axial binding residue" evidence="2">
    <location>
        <position position="182"/>
    </location>
    <ligand>
        <name>heme b</name>
        <dbReference type="ChEBI" id="CHEBI:60344"/>
        <label>b562</label>
    </ligand>
    <ligandPart>
        <name>Fe</name>
        <dbReference type="ChEBI" id="CHEBI:18248"/>
    </ligandPart>
</feature>
<feature type="binding site" description="axial binding residue" evidence="2">
    <location>
        <position position="196"/>
    </location>
    <ligand>
        <name>heme b</name>
        <dbReference type="ChEBI" id="CHEBI:60344"/>
        <label>b566</label>
    </ligand>
    <ligandPart>
        <name>Fe</name>
        <dbReference type="ChEBI" id="CHEBI:18248"/>
    </ligandPart>
</feature>
<feature type="binding site" evidence="2">
    <location>
        <position position="201"/>
    </location>
    <ligand>
        <name>a ubiquinone</name>
        <dbReference type="ChEBI" id="CHEBI:16389"/>
    </ligand>
</feature>
<sequence length="380" mass="42812">MTIIRKKHPLIKIINHSFIDLPAPSNISSWWNFGSLLGLCLIIQILTGLFLAMHYTSDTSTAFSSVTHICRDVNYGWLIRYMHANGASMFFICLFLHVGRGMYYGSYNMIETWNMGIILLFAVMATAFMGYVLPWGQMSFWGATVITNLLSAIPYIGTTLVEWIWGGFSVDKATLTRFFAFHFILPFIITALVLVHLLFLHETGSNNPTGLNSDADKIPFHPYYTIKDFLGVLILLMGLMILVLFFPDVLGDPDNYTPANPLNTPAHIKPEWYFLFAYAILRSIPNKLGGVLALILSILILALLPLLHTSKQRGLTFRPITQTMYWILVADLLILTWIGGQPVEYPFIIIGQTASIAYFTIIVILMPMAGMIENNILDLD</sequence>
<dbReference type="EMBL" id="AY309411">
    <property type="protein sequence ID" value="AAQ77203.1"/>
    <property type="molecule type" value="Genomic_DNA"/>
</dbReference>
<dbReference type="SMR" id="Q6W6L7"/>
<dbReference type="GO" id="GO:0005743">
    <property type="term" value="C:mitochondrial inner membrane"/>
    <property type="evidence" value="ECO:0007669"/>
    <property type="project" value="UniProtKB-SubCell"/>
</dbReference>
<dbReference type="GO" id="GO:0045275">
    <property type="term" value="C:respiratory chain complex III"/>
    <property type="evidence" value="ECO:0007669"/>
    <property type="project" value="InterPro"/>
</dbReference>
<dbReference type="GO" id="GO:0046872">
    <property type="term" value="F:metal ion binding"/>
    <property type="evidence" value="ECO:0007669"/>
    <property type="project" value="UniProtKB-KW"/>
</dbReference>
<dbReference type="GO" id="GO:0008121">
    <property type="term" value="F:ubiquinol-cytochrome-c reductase activity"/>
    <property type="evidence" value="ECO:0007669"/>
    <property type="project" value="InterPro"/>
</dbReference>
<dbReference type="GO" id="GO:0006122">
    <property type="term" value="P:mitochondrial electron transport, ubiquinol to cytochrome c"/>
    <property type="evidence" value="ECO:0007669"/>
    <property type="project" value="TreeGrafter"/>
</dbReference>
<dbReference type="CDD" id="cd00290">
    <property type="entry name" value="cytochrome_b_C"/>
    <property type="match status" value="1"/>
</dbReference>
<dbReference type="CDD" id="cd00284">
    <property type="entry name" value="Cytochrome_b_N"/>
    <property type="match status" value="1"/>
</dbReference>
<dbReference type="FunFam" id="1.20.810.10:FF:000002">
    <property type="entry name" value="Cytochrome b"/>
    <property type="match status" value="1"/>
</dbReference>
<dbReference type="Gene3D" id="1.20.810.10">
    <property type="entry name" value="Cytochrome Bc1 Complex, Chain C"/>
    <property type="match status" value="1"/>
</dbReference>
<dbReference type="InterPro" id="IPR005798">
    <property type="entry name" value="Cyt_b/b6_C"/>
</dbReference>
<dbReference type="InterPro" id="IPR036150">
    <property type="entry name" value="Cyt_b/b6_C_sf"/>
</dbReference>
<dbReference type="InterPro" id="IPR005797">
    <property type="entry name" value="Cyt_b/b6_N"/>
</dbReference>
<dbReference type="InterPro" id="IPR027387">
    <property type="entry name" value="Cytb/b6-like_sf"/>
</dbReference>
<dbReference type="InterPro" id="IPR030689">
    <property type="entry name" value="Cytochrome_b"/>
</dbReference>
<dbReference type="InterPro" id="IPR048260">
    <property type="entry name" value="Cytochrome_b_C_euk/bac"/>
</dbReference>
<dbReference type="InterPro" id="IPR048259">
    <property type="entry name" value="Cytochrome_b_N_euk/bac"/>
</dbReference>
<dbReference type="InterPro" id="IPR016174">
    <property type="entry name" value="Di-haem_cyt_TM"/>
</dbReference>
<dbReference type="PANTHER" id="PTHR19271">
    <property type="entry name" value="CYTOCHROME B"/>
    <property type="match status" value="1"/>
</dbReference>
<dbReference type="PANTHER" id="PTHR19271:SF16">
    <property type="entry name" value="CYTOCHROME B"/>
    <property type="match status" value="1"/>
</dbReference>
<dbReference type="Pfam" id="PF00032">
    <property type="entry name" value="Cytochrom_B_C"/>
    <property type="match status" value="1"/>
</dbReference>
<dbReference type="Pfam" id="PF00033">
    <property type="entry name" value="Cytochrome_B"/>
    <property type="match status" value="1"/>
</dbReference>
<dbReference type="PIRSF" id="PIRSF038885">
    <property type="entry name" value="COB"/>
    <property type="match status" value="1"/>
</dbReference>
<dbReference type="SUPFAM" id="SSF81648">
    <property type="entry name" value="a domain/subunit of cytochrome bc1 complex (Ubiquinol-cytochrome c reductase)"/>
    <property type="match status" value="1"/>
</dbReference>
<dbReference type="SUPFAM" id="SSF81342">
    <property type="entry name" value="Transmembrane di-heme cytochromes"/>
    <property type="match status" value="1"/>
</dbReference>
<dbReference type="PROSITE" id="PS51003">
    <property type="entry name" value="CYTB_CTER"/>
    <property type="match status" value="1"/>
</dbReference>
<dbReference type="PROSITE" id="PS51002">
    <property type="entry name" value="CYTB_NTER"/>
    <property type="match status" value="1"/>
</dbReference>
<proteinExistence type="inferred from homology"/>